<reference key="1">
    <citation type="journal article" date="2005" name="BMC Genomics">
        <title>Characterization of 954 bovine full-CDS cDNA sequences.</title>
        <authorList>
            <person name="Harhay G.P."/>
            <person name="Sonstegard T.S."/>
            <person name="Keele J.W."/>
            <person name="Heaton M.P."/>
            <person name="Clawson M.L."/>
            <person name="Snelling W.M."/>
            <person name="Wiedmann R.T."/>
            <person name="Van Tassell C.P."/>
            <person name="Smith T.P.L."/>
        </authorList>
    </citation>
    <scope>NUCLEOTIDE SEQUENCE [LARGE SCALE MRNA]</scope>
</reference>
<feature type="chain" id="PRO_0000244432" description="Geranylgeranyl transferase type-1 subunit beta">
    <location>
        <begin position="1"/>
        <end position="377"/>
    </location>
</feature>
<feature type="repeat" description="PFTB 1">
    <location>
        <begin position="144"/>
        <end position="186"/>
    </location>
</feature>
<feature type="repeat" description="PFTB 2">
    <location>
        <begin position="193"/>
        <end position="234"/>
    </location>
</feature>
<feature type="repeat" description="PFTB 3">
    <location>
        <begin position="245"/>
        <end position="284"/>
    </location>
</feature>
<feature type="repeat" description="PFTB 4">
    <location>
        <begin position="291"/>
        <end position="333"/>
    </location>
</feature>
<feature type="binding site" evidence="3">
    <location>
        <begin position="219"/>
        <end position="221"/>
    </location>
    <ligand>
        <name>geranylgeranyl diphosphate</name>
        <dbReference type="ChEBI" id="CHEBI:57533"/>
    </ligand>
</feature>
<feature type="binding site" evidence="3">
    <location>
        <begin position="263"/>
        <end position="266"/>
    </location>
    <ligand>
        <name>geranylgeranyl diphosphate</name>
        <dbReference type="ChEBI" id="CHEBI:57533"/>
    </ligand>
</feature>
<feature type="binding site" evidence="3">
    <location>
        <position position="269"/>
    </location>
    <ligand>
        <name>Zn(2+)</name>
        <dbReference type="ChEBI" id="CHEBI:29105"/>
        <note>catalytic</note>
    </ligand>
</feature>
<feature type="binding site" evidence="3">
    <location>
        <position position="271"/>
    </location>
    <ligand>
        <name>Zn(2+)</name>
        <dbReference type="ChEBI" id="CHEBI:29105"/>
        <note>catalytic</note>
    </ligand>
</feature>
<feature type="binding site" evidence="3">
    <location>
        <begin position="272"/>
        <end position="275"/>
    </location>
    <ligand>
        <name>geranylgeranyl diphosphate</name>
        <dbReference type="ChEBI" id="CHEBI:57533"/>
    </ligand>
</feature>
<feature type="binding site" evidence="3">
    <location>
        <position position="321"/>
    </location>
    <ligand>
        <name>Zn(2+)</name>
        <dbReference type="ChEBI" id="CHEBI:29105"/>
        <note>catalytic</note>
    </ligand>
</feature>
<evidence type="ECO:0000250" key="1"/>
<evidence type="ECO:0000250" key="2">
    <source>
        <dbReference type="UniProtKB" id="P18898"/>
    </source>
</evidence>
<evidence type="ECO:0000250" key="3">
    <source>
        <dbReference type="UniProtKB" id="P53610"/>
    </source>
</evidence>
<evidence type="ECO:0000305" key="4"/>
<proteinExistence type="evidence at transcript level"/>
<comment type="function">
    <text evidence="1">Catalyzes the transfer of a geranyl-geranyl moiety from geranyl-geranyl pyrophosphate to a cysteine at the fourth position from the C-terminus of proteins having the C-terminal sequence Cys-aliphatic-aliphatic-X. Known substrates include RAC1, RAC2, RAP1A and RAP1B (By similarity).</text>
</comment>
<comment type="catalytic activity">
    <reaction>
        <text>geranylgeranyl diphosphate + L-cysteinyl-[protein] = S-geranylgeranyl-L-cysteinyl-[protein] + diphosphate</text>
        <dbReference type="Rhea" id="RHEA:21240"/>
        <dbReference type="Rhea" id="RHEA-COMP:10131"/>
        <dbReference type="Rhea" id="RHEA-COMP:11537"/>
        <dbReference type="ChEBI" id="CHEBI:29950"/>
        <dbReference type="ChEBI" id="CHEBI:33019"/>
        <dbReference type="ChEBI" id="CHEBI:57533"/>
        <dbReference type="ChEBI" id="CHEBI:86021"/>
        <dbReference type="EC" id="2.5.1.59"/>
    </reaction>
</comment>
<comment type="cofactor">
    <cofactor evidence="3">
        <name>Zn(2+)</name>
        <dbReference type="ChEBI" id="CHEBI:29105"/>
    </cofactor>
    <text evidence="3">Binds 1 zinc ion per subunit.</text>
</comment>
<comment type="cofactor">
    <cofactor evidence="2">
        <name>Mg(2+)</name>
        <dbReference type="ChEBI" id="CHEBI:18420"/>
    </cofactor>
</comment>
<comment type="subunit">
    <text evidence="1">Heterodimer of FNTA and PGGT1B. PGGT1B mediates interaction with substrate peptides (By similarity).</text>
</comment>
<comment type="similarity">
    <text evidence="4">Belongs to the protein prenyltransferase subunit beta family.</text>
</comment>
<keyword id="KW-0460">Magnesium</keyword>
<keyword id="KW-0479">Metal-binding</keyword>
<keyword id="KW-0637">Prenyltransferase</keyword>
<keyword id="KW-1185">Reference proteome</keyword>
<keyword id="KW-0677">Repeat</keyword>
<keyword id="KW-0808">Transferase</keyword>
<keyword id="KW-0862">Zinc</keyword>
<name>PGTB1_BOVIN</name>
<sequence>MAATEDERPTGSGEGERLDFLRDRHVRFFQRCLQVLPERYSSLETSRLTIAFFALSGLDMLDSLDVVNKDDIIEWIYSLQVLPTEDRSNLNRCGFRGSSYLGIPFNPSKNPGTAHPYDSGHIAMTYTGLSCLVILGDDLSRVNKEACLAGLRALQLEDGSFCAVPEGSENDMRFVYCASCICYMLNNWSGMDMKKAINYIRRSMSYDNGLAQGAGLESHGGSTFCGIASLCLMGKLEEVFSEKELNRIKRWCIMRQQNGYHGRPNKPVDTCYSFWVGATLKLLKIFQYTNFEKNRNYILSTQDRLVGGFAKWPDSHPDALHAYFGICGLSLMEESGICKVHPALNVSTRTSERLRDLHQSWKTKDSKQCSENVHIST</sequence>
<protein>
    <recommendedName>
        <fullName>Geranylgeranyl transferase type-1 subunit beta</fullName>
        <ecNumber>2.5.1.59</ecNumber>
    </recommendedName>
    <alternativeName>
        <fullName>Geranylgeranyl transferase type I subunit beta</fullName>
        <shortName>GGTase-I-beta</shortName>
    </alternativeName>
    <alternativeName>
        <fullName>Type I protein geranyl-geranyltransferase subunit beta</fullName>
    </alternativeName>
</protein>
<gene>
    <name type="primary">PGGT1B</name>
</gene>
<accession>Q5EAD5</accession>
<organism>
    <name type="scientific">Bos taurus</name>
    <name type="common">Bovine</name>
    <dbReference type="NCBI Taxonomy" id="9913"/>
    <lineage>
        <taxon>Eukaryota</taxon>
        <taxon>Metazoa</taxon>
        <taxon>Chordata</taxon>
        <taxon>Craniata</taxon>
        <taxon>Vertebrata</taxon>
        <taxon>Euteleostomi</taxon>
        <taxon>Mammalia</taxon>
        <taxon>Eutheria</taxon>
        <taxon>Laurasiatheria</taxon>
        <taxon>Artiodactyla</taxon>
        <taxon>Ruminantia</taxon>
        <taxon>Pecora</taxon>
        <taxon>Bovidae</taxon>
        <taxon>Bovinae</taxon>
        <taxon>Bos</taxon>
    </lineage>
</organism>
<dbReference type="EC" id="2.5.1.59"/>
<dbReference type="EMBL" id="BT020634">
    <property type="protein sequence ID" value="AAX08651.1"/>
    <property type="molecule type" value="mRNA"/>
</dbReference>
<dbReference type="RefSeq" id="NP_001015560.1">
    <property type="nucleotide sequence ID" value="NM_001015560.1"/>
</dbReference>
<dbReference type="SMR" id="Q5EAD5"/>
<dbReference type="ComplexPortal" id="CPX-2169">
    <property type="entry name" value="Protein geranylgeranyl transferase type I complex"/>
</dbReference>
<dbReference type="FunCoup" id="Q5EAD5">
    <property type="interactions" value="3948"/>
</dbReference>
<dbReference type="STRING" id="9913.ENSBTAP00000002466"/>
<dbReference type="BindingDB" id="Q5EAD5"/>
<dbReference type="ChEMBL" id="CHEMBL2096987"/>
<dbReference type="PaxDb" id="9913-ENSBTAP00000002466"/>
<dbReference type="GeneID" id="509322"/>
<dbReference type="KEGG" id="bta:509322"/>
<dbReference type="CTD" id="5229"/>
<dbReference type="VEuPathDB" id="HostDB:ENSBTAG00000001895"/>
<dbReference type="eggNOG" id="KOG0367">
    <property type="taxonomic scope" value="Eukaryota"/>
</dbReference>
<dbReference type="InParanoid" id="Q5EAD5"/>
<dbReference type="OMA" id="RWCLMRQ"/>
<dbReference type="OrthoDB" id="24893at2759"/>
<dbReference type="PRO" id="PR:Q5EAD5"/>
<dbReference type="Proteomes" id="UP000009136">
    <property type="component" value="Chromosome 10"/>
</dbReference>
<dbReference type="Bgee" id="ENSBTAG00000001895">
    <property type="expression patterns" value="Expressed in oocyte and 108 other cell types or tissues"/>
</dbReference>
<dbReference type="GO" id="GO:0005953">
    <property type="term" value="C:CAAX-protein geranylgeranyltransferase complex"/>
    <property type="evidence" value="ECO:0000353"/>
    <property type="project" value="ComplexPortal"/>
</dbReference>
<dbReference type="GO" id="GO:0004662">
    <property type="term" value="F:CAAX-protein geranylgeranyltransferase activity"/>
    <property type="evidence" value="ECO:0000250"/>
    <property type="project" value="UniProtKB"/>
</dbReference>
<dbReference type="GO" id="GO:0004661">
    <property type="term" value="F:protein geranylgeranyltransferase activity"/>
    <property type="evidence" value="ECO:0000250"/>
    <property type="project" value="UniProtKB"/>
</dbReference>
<dbReference type="GO" id="GO:0008270">
    <property type="term" value="F:zinc ion binding"/>
    <property type="evidence" value="ECO:0000250"/>
    <property type="project" value="UniProtKB"/>
</dbReference>
<dbReference type="GO" id="GO:0018344">
    <property type="term" value="P:protein geranylgeranylation"/>
    <property type="evidence" value="ECO:0000250"/>
    <property type="project" value="UniProtKB"/>
</dbReference>
<dbReference type="CDD" id="cd02895">
    <property type="entry name" value="GGTase-I"/>
    <property type="match status" value="1"/>
</dbReference>
<dbReference type="FunFam" id="1.50.10.20:FF:000005">
    <property type="entry name" value="Geranylgeranyl transferase type-1 subunit beta"/>
    <property type="match status" value="1"/>
</dbReference>
<dbReference type="Gene3D" id="1.50.10.20">
    <property type="match status" value="1"/>
</dbReference>
<dbReference type="InterPro" id="IPR041960">
    <property type="entry name" value="GGTase_I_beta"/>
</dbReference>
<dbReference type="InterPro" id="IPR045089">
    <property type="entry name" value="PGGT1B-like"/>
</dbReference>
<dbReference type="InterPro" id="IPR001330">
    <property type="entry name" value="Prenyltrans"/>
</dbReference>
<dbReference type="InterPro" id="IPR008930">
    <property type="entry name" value="Terpenoid_cyclase/PrenylTrfase"/>
</dbReference>
<dbReference type="PANTHER" id="PTHR11774">
    <property type="entry name" value="GERANYLGERANYL TRANSFERASE TYPE BETA SUBUNIT"/>
    <property type="match status" value="1"/>
</dbReference>
<dbReference type="PANTHER" id="PTHR11774:SF4">
    <property type="entry name" value="GERANYLGERANYL TRANSFERASE TYPE-1 SUBUNIT BETA"/>
    <property type="match status" value="1"/>
</dbReference>
<dbReference type="Pfam" id="PF00432">
    <property type="entry name" value="Prenyltrans"/>
    <property type="match status" value="1"/>
</dbReference>
<dbReference type="SFLD" id="SFLDG01015">
    <property type="entry name" value="Prenyltransferase_Like_1"/>
    <property type="match status" value="1"/>
</dbReference>
<dbReference type="SUPFAM" id="SSF48239">
    <property type="entry name" value="Terpenoid cyclases/Protein prenyltransferases"/>
    <property type="match status" value="1"/>
</dbReference>